<feature type="chain" id="PRO_0000383839" description="Hydroxyethylthiazole kinase 1">
    <location>
        <begin position="1"/>
        <end position="263"/>
    </location>
</feature>
<feature type="binding site" evidence="1">
    <location>
        <position position="42"/>
    </location>
    <ligand>
        <name>substrate</name>
    </ligand>
</feature>
<feature type="binding site" evidence="1">
    <location>
        <position position="118"/>
    </location>
    <ligand>
        <name>ATP</name>
        <dbReference type="ChEBI" id="CHEBI:30616"/>
    </ligand>
</feature>
<feature type="binding site" evidence="1">
    <location>
        <position position="164"/>
    </location>
    <ligand>
        <name>ATP</name>
        <dbReference type="ChEBI" id="CHEBI:30616"/>
    </ligand>
</feature>
<feature type="binding site" evidence="1">
    <location>
        <position position="191"/>
    </location>
    <ligand>
        <name>substrate</name>
    </ligand>
</feature>
<comment type="function">
    <text evidence="1">Catalyzes the phosphorylation of the hydroxyl group of 4-methyl-5-beta-hydroxyethylthiazole (THZ).</text>
</comment>
<comment type="catalytic activity">
    <reaction evidence="1">
        <text>5-(2-hydroxyethyl)-4-methylthiazole + ATP = 4-methyl-5-(2-phosphooxyethyl)-thiazole + ADP + H(+)</text>
        <dbReference type="Rhea" id="RHEA:24212"/>
        <dbReference type="ChEBI" id="CHEBI:15378"/>
        <dbReference type="ChEBI" id="CHEBI:17957"/>
        <dbReference type="ChEBI" id="CHEBI:30616"/>
        <dbReference type="ChEBI" id="CHEBI:58296"/>
        <dbReference type="ChEBI" id="CHEBI:456216"/>
        <dbReference type="EC" id="2.7.1.50"/>
    </reaction>
</comment>
<comment type="cofactor">
    <cofactor evidence="1">
        <name>Mg(2+)</name>
        <dbReference type="ChEBI" id="CHEBI:18420"/>
    </cofactor>
</comment>
<comment type="pathway">
    <text evidence="1">Cofactor biosynthesis; thiamine diphosphate biosynthesis; 4-methyl-5-(2-phosphoethyl)-thiazole from 5-(2-hydroxyethyl)-4-methylthiazole: step 1/1.</text>
</comment>
<comment type="similarity">
    <text evidence="1">Belongs to the Thz kinase family.</text>
</comment>
<dbReference type="EC" id="2.7.1.50" evidence="1"/>
<dbReference type="EMBL" id="CP001083">
    <property type="protein sequence ID" value="ACQ51920.1"/>
    <property type="molecule type" value="Genomic_DNA"/>
</dbReference>
<dbReference type="SMR" id="C3L062"/>
<dbReference type="KEGG" id="cbi:CLJ_B0522"/>
<dbReference type="HOGENOM" id="CLU_019943_0_0_9"/>
<dbReference type="UniPathway" id="UPA00060">
    <property type="reaction ID" value="UER00139"/>
</dbReference>
<dbReference type="Proteomes" id="UP000002333">
    <property type="component" value="Chromosome"/>
</dbReference>
<dbReference type="GO" id="GO:0005524">
    <property type="term" value="F:ATP binding"/>
    <property type="evidence" value="ECO:0007669"/>
    <property type="project" value="UniProtKB-UniRule"/>
</dbReference>
<dbReference type="GO" id="GO:0004417">
    <property type="term" value="F:hydroxyethylthiazole kinase activity"/>
    <property type="evidence" value="ECO:0007669"/>
    <property type="project" value="UniProtKB-UniRule"/>
</dbReference>
<dbReference type="GO" id="GO:0000287">
    <property type="term" value="F:magnesium ion binding"/>
    <property type="evidence" value="ECO:0007669"/>
    <property type="project" value="UniProtKB-UniRule"/>
</dbReference>
<dbReference type="GO" id="GO:0009228">
    <property type="term" value="P:thiamine biosynthetic process"/>
    <property type="evidence" value="ECO:0007669"/>
    <property type="project" value="UniProtKB-KW"/>
</dbReference>
<dbReference type="GO" id="GO:0009229">
    <property type="term" value="P:thiamine diphosphate biosynthetic process"/>
    <property type="evidence" value="ECO:0007669"/>
    <property type="project" value="UniProtKB-UniRule"/>
</dbReference>
<dbReference type="CDD" id="cd01170">
    <property type="entry name" value="THZ_kinase"/>
    <property type="match status" value="1"/>
</dbReference>
<dbReference type="Gene3D" id="3.40.1190.20">
    <property type="match status" value="1"/>
</dbReference>
<dbReference type="HAMAP" id="MF_00228">
    <property type="entry name" value="Thz_kinase"/>
    <property type="match status" value="1"/>
</dbReference>
<dbReference type="InterPro" id="IPR000417">
    <property type="entry name" value="Hyethyz_kinase"/>
</dbReference>
<dbReference type="InterPro" id="IPR029056">
    <property type="entry name" value="Ribokinase-like"/>
</dbReference>
<dbReference type="NCBIfam" id="NF006830">
    <property type="entry name" value="PRK09355.1"/>
    <property type="match status" value="1"/>
</dbReference>
<dbReference type="NCBIfam" id="TIGR00694">
    <property type="entry name" value="thiM"/>
    <property type="match status" value="1"/>
</dbReference>
<dbReference type="Pfam" id="PF02110">
    <property type="entry name" value="HK"/>
    <property type="match status" value="1"/>
</dbReference>
<dbReference type="PIRSF" id="PIRSF000513">
    <property type="entry name" value="Thz_kinase"/>
    <property type="match status" value="1"/>
</dbReference>
<dbReference type="PRINTS" id="PR01099">
    <property type="entry name" value="HYETHTZKNASE"/>
</dbReference>
<dbReference type="SUPFAM" id="SSF53613">
    <property type="entry name" value="Ribokinase-like"/>
    <property type="match status" value="1"/>
</dbReference>
<keyword id="KW-0067">ATP-binding</keyword>
<keyword id="KW-0418">Kinase</keyword>
<keyword id="KW-0460">Magnesium</keyword>
<keyword id="KW-0479">Metal-binding</keyword>
<keyword id="KW-0547">Nucleotide-binding</keyword>
<keyword id="KW-0784">Thiamine biosynthesis</keyword>
<keyword id="KW-0808">Transferase</keyword>
<evidence type="ECO:0000255" key="1">
    <source>
        <dbReference type="HAMAP-Rule" id="MF_00228"/>
    </source>
</evidence>
<gene>
    <name evidence="1" type="primary">thiM1</name>
    <name type="ordered locus">CLJ_B0522</name>
</gene>
<sequence>MENKNVIQKMREKTPLIHCITNYVTINDCANILLSFGASPAMCEAYDEVYDFVSISSALYINLGTLTKEQETAAVLASISAKNHNVPVVIDPVGCPAIKRKVEVINRMAEVGRIDIIKGNIGEIKFLAGMDSETRGVDSLDNGENALDACTQLAKKYNCIVAATGEKDFVSDGKRGSVIKNGTEMLTKVTGAGCMLGALCAATCANFEDKLVSTTAAILSMNIAGEKAYEKAQLPGSFRIALIDNIYMISDEEIWERGNVEWK</sequence>
<accession>C3L062</accession>
<reference key="1">
    <citation type="submission" date="2008-05" db="EMBL/GenBank/DDBJ databases">
        <title>Genome sequence of Clostridium botulinum Ba4 strain 657.</title>
        <authorList>
            <person name="Shrivastava S."/>
            <person name="Brown J.L."/>
            <person name="Bruce D."/>
            <person name="Detter C."/>
            <person name="Munk C."/>
            <person name="Smith L.A."/>
            <person name="Smith T.J."/>
            <person name="Sutton G."/>
            <person name="Brettin T.S."/>
        </authorList>
    </citation>
    <scope>NUCLEOTIDE SEQUENCE [LARGE SCALE GENOMIC DNA]</scope>
    <source>
        <strain>657 / Type Ba4</strain>
    </source>
</reference>
<proteinExistence type="inferred from homology"/>
<protein>
    <recommendedName>
        <fullName evidence="1">Hydroxyethylthiazole kinase 1</fullName>
        <ecNumber evidence="1">2.7.1.50</ecNumber>
    </recommendedName>
    <alternativeName>
        <fullName evidence="1">4-methyl-5-beta-hydroxyethylthiazole kinase 1</fullName>
        <shortName evidence="1">TH kinase 1</shortName>
        <shortName evidence="1">Thz kinase 1</shortName>
    </alternativeName>
</protein>
<organism>
    <name type="scientific">Clostridium botulinum (strain 657 / Type Ba4)</name>
    <dbReference type="NCBI Taxonomy" id="515621"/>
    <lineage>
        <taxon>Bacteria</taxon>
        <taxon>Bacillati</taxon>
        <taxon>Bacillota</taxon>
        <taxon>Clostridia</taxon>
        <taxon>Eubacteriales</taxon>
        <taxon>Clostridiaceae</taxon>
        <taxon>Clostridium</taxon>
    </lineage>
</organism>
<name>THIM1_CLOB6</name>